<name>AROC_PROM1</name>
<proteinExistence type="inferred from homology"/>
<protein>
    <recommendedName>
        <fullName evidence="1">Chorismate synthase</fullName>
        <shortName evidence="1">CS</shortName>
        <ecNumber evidence="1">4.2.3.5</ecNumber>
    </recommendedName>
    <alternativeName>
        <fullName evidence="1">5-enolpyruvylshikimate-3-phosphate phospholyase</fullName>
    </alternativeName>
</protein>
<comment type="function">
    <text evidence="1">Catalyzes the anti-1,4-elimination of the C-3 phosphate and the C-6 proR hydrogen from 5-enolpyruvylshikimate-3-phosphate (EPSP) to yield chorismate, which is the branch point compound that serves as the starting substrate for the three terminal pathways of aromatic amino acid biosynthesis. This reaction introduces a second double bond into the aromatic ring system.</text>
</comment>
<comment type="catalytic activity">
    <reaction evidence="1">
        <text>5-O-(1-carboxyvinyl)-3-phosphoshikimate = chorismate + phosphate</text>
        <dbReference type="Rhea" id="RHEA:21020"/>
        <dbReference type="ChEBI" id="CHEBI:29748"/>
        <dbReference type="ChEBI" id="CHEBI:43474"/>
        <dbReference type="ChEBI" id="CHEBI:57701"/>
        <dbReference type="EC" id="4.2.3.5"/>
    </reaction>
</comment>
<comment type="cofactor">
    <cofactor evidence="1">
        <name>FMNH2</name>
        <dbReference type="ChEBI" id="CHEBI:57618"/>
    </cofactor>
    <text evidence="1">Reduced FMN (FMNH(2)).</text>
</comment>
<comment type="pathway">
    <text evidence="1">Metabolic intermediate biosynthesis; chorismate biosynthesis; chorismate from D-erythrose 4-phosphate and phosphoenolpyruvate: step 7/7.</text>
</comment>
<comment type="subunit">
    <text evidence="1">Homotetramer.</text>
</comment>
<comment type="similarity">
    <text evidence="1">Belongs to the chorismate synthase family.</text>
</comment>
<accession>A2C058</accession>
<gene>
    <name evidence="1" type="primary">aroC</name>
    <name type="ordered locus">NATL1_03041</name>
</gene>
<reference key="1">
    <citation type="journal article" date="2007" name="PLoS Genet.">
        <title>Patterns and implications of gene gain and loss in the evolution of Prochlorococcus.</title>
        <authorList>
            <person name="Kettler G.C."/>
            <person name="Martiny A.C."/>
            <person name="Huang K."/>
            <person name="Zucker J."/>
            <person name="Coleman M.L."/>
            <person name="Rodrigue S."/>
            <person name="Chen F."/>
            <person name="Lapidus A."/>
            <person name="Ferriera S."/>
            <person name="Johnson J."/>
            <person name="Steglich C."/>
            <person name="Church G.M."/>
            <person name="Richardson P."/>
            <person name="Chisholm S.W."/>
        </authorList>
    </citation>
    <scope>NUCLEOTIDE SEQUENCE [LARGE SCALE GENOMIC DNA]</scope>
    <source>
        <strain>NATL1A</strain>
    </source>
</reference>
<organism>
    <name type="scientific">Prochlorococcus marinus (strain NATL1A)</name>
    <dbReference type="NCBI Taxonomy" id="167555"/>
    <lineage>
        <taxon>Bacteria</taxon>
        <taxon>Bacillati</taxon>
        <taxon>Cyanobacteriota</taxon>
        <taxon>Cyanophyceae</taxon>
        <taxon>Synechococcales</taxon>
        <taxon>Prochlorococcaceae</taxon>
        <taxon>Prochlorococcus</taxon>
    </lineage>
</organism>
<dbReference type="EC" id="4.2.3.5" evidence="1"/>
<dbReference type="EMBL" id="CP000553">
    <property type="protein sequence ID" value="ABM74868.1"/>
    <property type="molecule type" value="Genomic_DNA"/>
</dbReference>
<dbReference type="RefSeq" id="WP_011823079.1">
    <property type="nucleotide sequence ID" value="NC_008819.1"/>
</dbReference>
<dbReference type="SMR" id="A2C058"/>
<dbReference type="KEGG" id="pme:NATL1_03041"/>
<dbReference type="eggNOG" id="COG0082">
    <property type="taxonomic scope" value="Bacteria"/>
</dbReference>
<dbReference type="HOGENOM" id="CLU_034547_0_1_3"/>
<dbReference type="UniPathway" id="UPA00053">
    <property type="reaction ID" value="UER00090"/>
</dbReference>
<dbReference type="Proteomes" id="UP000002592">
    <property type="component" value="Chromosome"/>
</dbReference>
<dbReference type="GO" id="GO:0005829">
    <property type="term" value="C:cytosol"/>
    <property type="evidence" value="ECO:0007669"/>
    <property type="project" value="TreeGrafter"/>
</dbReference>
<dbReference type="GO" id="GO:0004107">
    <property type="term" value="F:chorismate synthase activity"/>
    <property type="evidence" value="ECO:0007669"/>
    <property type="project" value="UniProtKB-UniRule"/>
</dbReference>
<dbReference type="GO" id="GO:0010181">
    <property type="term" value="F:FMN binding"/>
    <property type="evidence" value="ECO:0007669"/>
    <property type="project" value="TreeGrafter"/>
</dbReference>
<dbReference type="GO" id="GO:0008652">
    <property type="term" value="P:amino acid biosynthetic process"/>
    <property type="evidence" value="ECO:0007669"/>
    <property type="project" value="UniProtKB-KW"/>
</dbReference>
<dbReference type="GO" id="GO:0009073">
    <property type="term" value="P:aromatic amino acid family biosynthetic process"/>
    <property type="evidence" value="ECO:0007669"/>
    <property type="project" value="UniProtKB-KW"/>
</dbReference>
<dbReference type="GO" id="GO:0009423">
    <property type="term" value="P:chorismate biosynthetic process"/>
    <property type="evidence" value="ECO:0007669"/>
    <property type="project" value="UniProtKB-UniRule"/>
</dbReference>
<dbReference type="CDD" id="cd07304">
    <property type="entry name" value="Chorismate_synthase"/>
    <property type="match status" value="1"/>
</dbReference>
<dbReference type="FunFam" id="3.60.150.10:FF:000003">
    <property type="entry name" value="Chorismate synthase"/>
    <property type="match status" value="1"/>
</dbReference>
<dbReference type="Gene3D" id="3.60.150.10">
    <property type="entry name" value="Chorismate synthase AroC"/>
    <property type="match status" value="1"/>
</dbReference>
<dbReference type="HAMAP" id="MF_00300">
    <property type="entry name" value="Chorismate_synth"/>
    <property type="match status" value="1"/>
</dbReference>
<dbReference type="InterPro" id="IPR000453">
    <property type="entry name" value="Chorismate_synth"/>
</dbReference>
<dbReference type="InterPro" id="IPR035904">
    <property type="entry name" value="Chorismate_synth_AroC_sf"/>
</dbReference>
<dbReference type="InterPro" id="IPR020541">
    <property type="entry name" value="Chorismate_synthase_CS"/>
</dbReference>
<dbReference type="NCBIfam" id="TIGR00033">
    <property type="entry name" value="aroC"/>
    <property type="match status" value="1"/>
</dbReference>
<dbReference type="NCBIfam" id="NF003793">
    <property type="entry name" value="PRK05382.1"/>
    <property type="match status" value="1"/>
</dbReference>
<dbReference type="PANTHER" id="PTHR21085">
    <property type="entry name" value="CHORISMATE SYNTHASE"/>
    <property type="match status" value="1"/>
</dbReference>
<dbReference type="PANTHER" id="PTHR21085:SF0">
    <property type="entry name" value="CHORISMATE SYNTHASE"/>
    <property type="match status" value="1"/>
</dbReference>
<dbReference type="Pfam" id="PF01264">
    <property type="entry name" value="Chorismate_synt"/>
    <property type="match status" value="1"/>
</dbReference>
<dbReference type="PIRSF" id="PIRSF001456">
    <property type="entry name" value="Chorismate_synth"/>
    <property type="match status" value="1"/>
</dbReference>
<dbReference type="SUPFAM" id="SSF103263">
    <property type="entry name" value="Chorismate synthase, AroC"/>
    <property type="match status" value="1"/>
</dbReference>
<dbReference type="PROSITE" id="PS00787">
    <property type="entry name" value="CHORISMATE_SYNTHASE_1"/>
    <property type="match status" value="1"/>
</dbReference>
<dbReference type="PROSITE" id="PS00788">
    <property type="entry name" value="CHORISMATE_SYNTHASE_2"/>
    <property type="match status" value="1"/>
</dbReference>
<dbReference type="PROSITE" id="PS00789">
    <property type="entry name" value="CHORISMATE_SYNTHASE_3"/>
    <property type="match status" value="1"/>
</dbReference>
<feature type="chain" id="PRO_1000022522" description="Chorismate synthase">
    <location>
        <begin position="1"/>
        <end position="361"/>
    </location>
</feature>
<feature type="binding site" evidence="1">
    <location>
        <position position="47"/>
    </location>
    <ligand>
        <name>NADP(+)</name>
        <dbReference type="ChEBI" id="CHEBI:58349"/>
    </ligand>
</feature>
<feature type="binding site" evidence="1">
    <location>
        <begin position="124"/>
        <end position="126"/>
    </location>
    <ligand>
        <name>FMN</name>
        <dbReference type="ChEBI" id="CHEBI:58210"/>
    </ligand>
</feature>
<feature type="binding site" evidence="1">
    <location>
        <position position="286"/>
    </location>
    <ligand>
        <name>FMN</name>
        <dbReference type="ChEBI" id="CHEBI:58210"/>
    </ligand>
</feature>
<feature type="binding site" evidence="1">
    <location>
        <begin position="301"/>
        <end position="305"/>
    </location>
    <ligand>
        <name>FMN</name>
        <dbReference type="ChEBI" id="CHEBI:58210"/>
    </ligand>
</feature>
<feature type="binding site" evidence="1">
    <location>
        <position position="327"/>
    </location>
    <ligand>
        <name>FMN</name>
        <dbReference type="ChEBI" id="CHEBI:58210"/>
    </ligand>
</feature>
<keyword id="KW-0028">Amino-acid biosynthesis</keyword>
<keyword id="KW-0057">Aromatic amino acid biosynthesis</keyword>
<keyword id="KW-0274">FAD</keyword>
<keyword id="KW-0285">Flavoprotein</keyword>
<keyword id="KW-0288">FMN</keyword>
<keyword id="KW-0456">Lyase</keyword>
<keyword id="KW-0521">NADP</keyword>
<evidence type="ECO:0000255" key="1">
    <source>
        <dbReference type="HAMAP-Rule" id="MF_00300"/>
    </source>
</evidence>
<sequence length="361" mass="38830">MGSSFGKLFTISTFGESHGGGVGVIIDGCPPRLELDINEIQNDLNRRRPGQSKITTPRNESDEVEILSGLLGNKTLGTPIAMVVRNKDHRPKDYSEIKKTFRPSHADATYQKKYGIQASSGGGRASARETIGRVAAGSVAKQLLTKFAKTEILAWVKRIHDIEAEIHPSEVTFDEIEKNIVRCPNQSAADLMIQRVEAFGKEGDSCGGVIECVVRNPPIGLGMPVFDKLEADLAKALMSLPATKGFEVGSGFGGTYLKGSEHNDPFLPSDSNQLKTATNNSGGIQGGISNGEDIVLRVGFKPTATIRKSQKTIDEDGNAITLKATGRHDPCVLPRAVPMVEAMVALVLADHLLRQRGQCTD</sequence>